<sequence>MTTQESIKPLVDRILSNPLQFNAAMISNKSNNNDTSAAPENSSYIVIGKQHNNNSNSTAIAATAESKQIKENNLIDRPNGKKTNTVPKSMAEALLLYTSKNDKDAADATGAKKSAELSTELSTEPPSSSSEDDKVGKEEEEEGEIFHEARDYVEPRKASLKERDNADKGDGEDIGEDIGEDIGEDIGEDIGEDIGENLGSPLATIDDSSNENEKEKRKELSTSISSDDEIEDDEDEDDMDYDSSAMEKELPEEEENDSSSKISEGEKKSLYQDLMENSTVEVNRYEPVNNTKENGNRNPKGEEEEEEEEELKHKSRSITPPVTISNLSNFYQFNENINDRGSLNSTRIVKNWGDKFTNLKPRGLLNHGVTCYTNAAVQAMLHIPSIQHYLFDILMGKYDSTISKNSVSYTLAETSKKMWLPVSKNPRKNVSASYINPKHLISRLDDINCMMSEWQQEDSHEYFMSLMSRLQEDSVPKGHKLIESIIYDIFGGLLKQIVTCKSCGSISKTEQPFYDLSLHLKGKKKLDPNSDLSSDSINGTSATTSTTTSNAATKPSLSSSSSVNLNNGSPFAAASDLSSANRRFSIEKSIKDFFNPELIKVDKEQKGYVCEKCHKTTNAVKHSSILRAPETLLVHLKKFRFNGTSSSKMKQAVSYPMFLDLTEYCESKELPVKYQLLSVVVHEGRSLSSGHYIAHCKQPDGSWATYDDEYINIISERDVLKEPNAYYLLYTRLTPKSVPLPLAKSAMATGNVTSKSKQEQAVNEPNNRPLKINSKKNNRKKWKKNKKRKFTK</sequence>
<proteinExistence type="evidence at protein level"/>
<evidence type="ECO:0000255" key="1">
    <source>
        <dbReference type="PROSITE-ProRule" id="PRU01035"/>
    </source>
</evidence>
<evidence type="ECO:0000256" key="2">
    <source>
        <dbReference type="SAM" id="MobiDB-lite"/>
    </source>
</evidence>
<evidence type="ECO:0000269" key="3">
    <source>
    </source>
</evidence>
<evidence type="ECO:0000269" key="4">
    <source>
    </source>
</evidence>
<evidence type="ECO:0000269" key="5">
    <source>
    </source>
</evidence>
<evidence type="ECO:0000269" key="6">
    <source>
    </source>
</evidence>
<evidence type="ECO:0000269" key="7">
    <source>
    </source>
</evidence>
<evidence type="ECO:0000269" key="8">
    <source>
    </source>
</evidence>
<evidence type="ECO:0000269" key="9">
    <source>
    </source>
</evidence>
<evidence type="ECO:0000269" key="10">
    <source>
    </source>
</evidence>
<evidence type="ECO:0000269" key="11">
    <source>
    </source>
</evidence>
<evidence type="ECO:0000269" key="12">
    <source>
    </source>
</evidence>
<evidence type="ECO:0000269" key="13">
    <source>
    </source>
</evidence>
<evidence type="ECO:0000303" key="14">
    <source>
    </source>
</evidence>
<evidence type="ECO:0000305" key="15"/>
<dbReference type="EC" id="3.4.19.12" evidence="3"/>
<dbReference type="EMBL" id="Z71462">
    <property type="protein sequence ID" value="CAA96080.1"/>
    <property type="molecule type" value="Genomic_DNA"/>
</dbReference>
<dbReference type="EMBL" id="BK006947">
    <property type="protein sequence ID" value="DAA10367.2"/>
    <property type="molecule type" value="Genomic_DNA"/>
</dbReference>
<dbReference type="PIR" id="S63141">
    <property type="entry name" value="S63141"/>
</dbReference>
<dbReference type="RefSeq" id="NP_014213.2">
    <property type="nucleotide sequence ID" value="NM_001183024.2"/>
</dbReference>
<dbReference type="PDB" id="6RR0">
    <property type="method" value="X-ray"/>
    <property type="resolution" value="2.18 A"/>
    <property type="chains" value="H/I/J/K/L/M/N=117-128"/>
</dbReference>
<dbReference type="PDBsum" id="6RR0"/>
<dbReference type="SMR" id="P53874"/>
<dbReference type="BioGRID" id="35647">
    <property type="interactions" value="282"/>
</dbReference>
<dbReference type="DIP" id="DIP-6664N"/>
<dbReference type="FunCoup" id="P53874">
    <property type="interactions" value="205"/>
</dbReference>
<dbReference type="IntAct" id="P53874">
    <property type="interactions" value="50"/>
</dbReference>
<dbReference type="MINT" id="P53874"/>
<dbReference type="STRING" id="4932.YNL186W"/>
<dbReference type="MEROPS" id="C19.088"/>
<dbReference type="iPTMnet" id="P53874"/>
<dbReference type="PaxDb" id="4932-YNL186W"/>
<dbReference type="PeptideAtlas" id="P53874"/>
<dbReference type="EnsemblFungi" id="YNL186W_mRNA">
    <property type="protein sequence ID" value="YNL186W"/>
    <property type="gene ID" value="YNL186W"/>
</dbReference>
<dbReference type="GeneID" id="855535"/>
<dbReference type="KEGG" id="sce:YNL186W"/>
<dbReference type="AGR" id="SGD:S000005130"/>
<dbReference type="SGD" id="S000005130">
    <property type="gene designation" value="UBP10"/>
</dbReference>
<dbReference type="VEuPathDB" id="FungiDB:YNL186W"/>
<dbReference type="eggNOG" id="KOG1870">
    <property type="taxonomic scope" value="Eukaryota"/>
</dbReference>
<dbReference type="HOGENOM" id="CLU_016013_1_1_1"/>
<dbReference type="InParanoid" id="P53874"/>
<dbReference type="OMA" id="WCTYDDE"/>
<dbReference type="OrthoDB" id="289038at2759"/>
<dbReference type="BioCyc" id="YEAST:G3O-33197-MONOMER"/>
<dbReference type="Reactome" id="R-SCE-5689880">
    <property type="pathway name" value="Ub-specific processing proteases"/>
</dbReference>
<dbReference type="Reactome" id="R-SCE-9648002">
    <property type="pathway name" value="RAS processing"/>
</dbReference>
<dbReference type="BioGRID-ORCS" id="855535">
    <property type="hits" value="6 hits in 10 CRISPR screens"/>
</dbReference>
<dbReference type="PRO" id="PR:P53874"/>
<dbReference type="Proteomes" id="UP000002311">
    <property type="component" value="Chromosome XIV"/>
</dbReference>
<dbReference type="RNAct" id="P53874">
    <property type="molecule type" value="protein"/>
</dbReference>
<dbReference type="GO" id="GO:0000781">
    <property type="term" value="C:chromosome, telomeric region"/>
    <property type="evidence" value="ECO:0007669"/>
    <property type="project" value="UniProtKB-SubCell"/>
</dbReference>
<dbReference type="GO" id="GO:0005829">
    <property type="term" value="C:cytosol"/>
    <property type="evidence" value="ECO:0000318"/>
    <property type="project" value="GO_Central"/>
</dbReference>
<dbReference type="GO" id="GO:0043596">
    <property type="term" value="C:nuclear replication fork"/>
    <property type="evidence" value="ECO:0000314"/>
    <property type="project" value="SGD"/>
</dbReference>
<dbReference type="GO" id="GO:0005730">
    <property type="term" value="C:nucleolus"/>
    <property type="evidence" value="ECO:0000314"/>
    <property type="project" value="SGD"/>
</dbReference>
<dbReference type="GO" id="GO:0005634">
    <property type="term" value="C:nucleus"/>
    <property type="evidence" value="ECO:0000314"/>
    <property type="project" value="SGD"/>
</dbReference>
<dbReference type="GO" id="GO:0004843">
    <property type="term" value="F:cysteine-type deubiquitinase activity"/>
    <property type="evidence" value="ECO:0000314"/>
    <property type="project" value="SGD"/>
</dbReference>
<dbReference type="GO" id="GO:0016579">
    <property type="term" value="P:protein deubiquitination"/>
    <property type="evidence" value="ECO:0007669"/>
    <property type="project" value="InterPro"/>
</dbReference>
<dbReference type="GO" id="GO:0006508">
    <property type="term" value="P:proteolysis"/>
    <property type="evidence" value="ECO:0007669"/>
    <property type="project" value="UniProtKB-KW"/>
</dbReference>
<dbReference type="GO" id="GO:0031647">
    <property type="term" value="P:regulation of protein stability"/>
    <property type="evidence" value="ECO:0000318"/>
    <property type="project" value="GO_Central"/>
</dbReference>
<dbReference type="GO" id="GO:0031509">
    <property type="term" value="P:subtelomeric heterochromatin formation"/>
    <property type="evidence" value="ECO:0000315"/>
    <property type="project" value="SGD"/>
</dbReference>
<dbReference type="Gene3D" id="3.90.70.10">
    <property type="entry name" value="Cysteine proteinases"/>
    <property type="match status" value="1"/>
</dbReference>
<dbReference type="InterPro" id="IPR038765">
    <property type="entry name" value="Papain-like_cys_pep_sf"/>
</dbReference>
<dbReference type="InterPro" id="IPR050164">
    <property type="entry name" value="Peptidase_C19"/>
</dbReference>
<dbReference type="InterPro" id="IPR001394">
    <property type="entry name" value="Peptidase_C19_UCH"/>
</dbReference>
<dbReference type="InterPro" id="IPR018200">
    <property type="entry name" value="USP_CS"/>
</dbReference>
<dbReference type="InterPro" id="IPR028889">
    <property type="entry name" value="USP_dom"/>
</dbReference>
<dbReference type="PANTHER" id="PTHR24006">
    <property type="entry name" value="UBIQUITIN CARBOXYL-TERMINAL HYDROLASE"/>
    <property type="match status" value="1"/>
</dbReference>
<dbReference type="PANTHER" id="PTHR24006:SF758">
    <property type="entry name" value="UBIQUITIN CARBOXYL-TERMINAL HYDROLASE 36"/>
    <property type="match status" value="1"/>
</dbReference>
<dbReference type="Pfam" id="PF00443">
    <property type="entry name" value="UCH"/>
    <property type="match status" value="1"/>
</dbReference>
<dbReference type="SUPFAM" id="SSF54001">
    <property type="entry name" value="Cysteine proteinases"/>
    <property type="match status" value="1"/>
</dbReference>
<dbReference type="PROSITE" id="PS00973">
    <property type="entry name" value="USP_2"/>
    <property type="match status" value="1"/>
</dbReference>
<dbReference type="PROSITE" id="PS50235">
    <property type="entry name" value="USP_3"/>
    <property type="match status" value="1"/>
</dbReference>
<name>UBP10_YEAST</name>
<gene>
    <name type="primary">UBP10</name>
    <name evidence="14" type="synonym">DOT4</name>
    <name type="ordered locus">YNL186W</name>
    <name type="ORF">N1619</name>
</gene>
<comment type="function">
    <text evidence="3 4 5 6 7 8 9 10 11 13">Deubiquitinating enzyme involved in telomere and HM loci silencing, which is the repression of chromatin structure which leads to a stop in the transcription of nearby genes (PubMed:10490600, PubMed:14623890, PubMed:9755194). Targets histone H2B for deubiquitination, thus helping to localize SIR2 to the telomere (PubMed:15721261, PubMed:17028327, PubMed:22056669). At silent chromatin, including telomeres and the rDNA locus, not only maintains low H2B 'Lys-123' ubiquitination (H2BK123Ub), but also low H3 'Lys-4' and 'Lys-79' methylation (H3K4me and H3K79me, respectively) (PubMed:15721261, PubMed:15988024). Controls the proliferating-cell nuclear antigen PCNA/POL30 deubiquitination which is crucial for keeping TLS polymerases in check as well as for down-regulating the error-free bypass (PubMed:22829782). Deubiquitinates and stabilizes RPA190, the largest subunit of RNA polymerase I, to achieve optimal levels of ribosomes and cell growth (PubMed:22902402). Also protects nutrient transporters such as GAP1 from ubiquitin-dependent endocytosis (PubMed:11352638).</text>
</comment>
<comment type="catalytic activity">
    <reaction evidence="3">
        <text>Thiol-dependent hydrolysis of ester, thioester, amide, peptide and isopeptide bonds formed by the C-terminal Gly of ubiquitin (a 76-residue protein attached to proteins as an intracellular targeting signal).</text>
        <dbReference type="EC" id="3.4.19.12"/>
    </reaction>
</comment>
<comment type="subunit">
    <text evidence="3 10 12">Interacts with SIR4 (PubMed:10490600, PubMed:26149687). Interacts with the proliferating-cell nuclear antigen PCNA/POL30 (PubMed:22829782). Interacts with DHR2 and UTP22 (PubMed:22902402, PubMed:26149687).</text>
</comment>
<comment type="interaction">
    <interactant intactId="EBI-19873">
        <id>P53874</id>
    </interactant>
    <interactant intactId="EBI-5844">
        <id>P36009</id>
        <label>DHR2</label>
    </interactant>
    <organismsDiffer>false</organismsDiffer>
    <experiments>2</experiments>
</comment>
<comment type="subcellular location">
    <subcellularLocation>
        <location evidence="3">Nucleus</location>
    </subcellularLocation>
    <subcellularLocation>
        <location evidence="6">Chromosome</location>
        <location evidence="6">Telomere</location>
    </subcellularLocation>
    <subcellularLocation>
        <location evidence="11">Nucleus</location>
        <location evidence="11">Nucleolus</location>
    </subcellularLocation>
    <text evidence="7">Preferentially localizes to silent chromatin (PubMed:15988024).</text>
</comment>
<comment type="domain">
    <text evidence="12">Residues 2-27 within the N-terminal intrinsically disordered regions (IDR) constitute the binding module for DHR2 which is required to coordinate the UBP10-DHR2 interaction (PubMed:26149687).</text>
</comment>
<comment type="domain">
    <text evidence="12">Residues 109-145 within the N-terminal intrinsically disordered regions (IDR) constitute the binding module for SIR4 which required to coordinate the UBP10-SIR4 interaction, but also to direct UBP10's functional role in telomere chromatin silencing (PubMed:26149687).</text>
</comment>
<comment type="domain">
    <text evidence="12">Residues 167-208 within the N-terminal intrinsically disordered regions (IDR) constitute the binding module for UTP22 which is required to coordinate the UBP10-UTP22 interaction (PubMed:26149687).</text>
</comment>
<comment type="disruption phenotype">
    <text evidence="3 4 5 8 10 11">Exhibits reduced silencing and a corresponding decrease in the level of SIR4 (PubMed:10490600). Also reduces the level of the low-affinity, high-capacity transporter of amino acids GAP1 (PubMed:11352638). Leads to alterations in expression of subtelomeric genes together with a broad change in the whole transcriptional profile, closely parallel to that induced by oxidative stress (PubMed:14623890). Also results in extrachromosomal rDNA circles (ERCs) accumulation (PubMed:17028327). Also accumulates mono- and di-ubiquitinated PCNA/POL30 in response to DNA damage and replicative stress (PubMed:22829782). Leads to reduced pre-rRNAs, mature rRNAs, and translating ribosomes (PubMed:22902402).</text>
</comment>
<comment type="similarity">
    <text evidence="15">Belongs to the peptidase C19 family.</text>
</comment>
<accession>P53874</accession>
<accession>D6W101</accession>
<keyword id="KW-0002">3D-structure</keyword>
<keyword id="KW-0158">Chromosome</keyword>
<keyword id="KW-0378">Hydrolase</keyword>
<keyword id="KW-0539">Nucleus</keyword>
<keyword id="KW-0645">Protease</keyword>
<keyword id="KW-1185">Reference proteome</keyword>
<keyword id="KW-0779">Telomere</keyword>
<keyword id="KW-0788">Thiol protease</keyword>
<keyword id="KW-0833">Ubl conjugation pathway</keyword>
<reference key="1">
    <citation type="journal article" date="1997" name="Nature">
        <title>The nucleotide sequence of Saccharomyces cerevisiae chromosome XIV and its evolutionary implications.</title>
        <authorList>
            <person name="Philippsen P."/>
            <person name="Kleine K."/>
            <person name="Poehlmann R."/>
            <person name="Duesterhoeft A."/>
            <person name="Hamberg K."/>
            <person name="Hegemann J.H."/>
            <person name="Obermaier B."/>
            <person name="Urrestarazu L.A."/>
            <person name="Aert R."/>
            <person name="Albermann K."/>
            <person name="Altmann R."/>
            <person name="Andre B."/>
            <person name="Baladron V."/>
            <person name="Ballesta J.P.G."/>
            <person name="Becam A.-M."/>
            <person name="Beinhauer J.D."/>
            <person name="Boskovic J."/>
            <person name="Buitrago M.J."/>
            <person name="Bussereau F."/>
            <person name="Coster F."/>
            <person name="Crouzet M."/>
            <person name="D'Angelo M."/>
            <person name="Dal Pero F."/>
            <person name="De Antoni A."/>
            <person name="del Rey F."/>
            <person name="Doignon F."/>
            <person name="Domdey H."/>
            <person name="Dubois E."/>
            <person name="Fiedler T.A."/>
            <person name="Fleig U."/>
            <person name="Floeth M."/>
            <person name="Fritz C."/>
            <person name="Gaillardin C."/>
            <person name="Garcia-Cantalejo J.M."/>
            <person name="Glansdorff N."/>
            <person name="Goffeau A."/>
            <person name="Gueldener U."/>
            <person name="Herbert C.J."/>
            <person name="Heumann K."/>
            <person name="Heuss-Neitzel D."/>
            <person name="Hilbert H."/>
            <person name="Hinni K."/>
            <person name="Iraqui Houssaini I."/>
            <person name="Jacquet M."/>
            <person name="Jimenez A."/>
            <person name="Jonniaux J.-L."/>
            <person name="Karpfinger-Hartl L."/>
            <person name="Lanfranchi G."/>
            <person name="Lepingle A."/>
            <person name="Levesque H."/>
            <person name="Lyck R."/>
            <person name="Maftahi M."/>
            <person name="Mallet L."/>
            <person name="Maurer C.T.C."/>
            <person name="Messenguy F."/>
            <person name="Mewes H.-W."/>
            <person name="Moestl D."/>
            <person name="Nasr F."/>
            <person name="Nicaud J.-M."/>
            <person name="Niedenthal R.K."/>
            <person name="Pandolfo D."/>
            <person name="Pierard A."/>
            <person name="Piravandi E."/>
            <person name="Planta R.J."/>
            <person name="Pohl T.M."/>
            <person name="Purnelle B."/>
            <person name="Rebischung C."/>
            <person name="Remacha M.A."/>
            <person name="Revuelta J.L."/>
            <person name="Rinke M."/>
            <person name="Saiz J.E."/>
            <person name="Sartorello F."/>
            <person name="Scherens B."/>
            <person name="Sen-Gupta M."/>
            <person name="Soler-Mira A."/>
            <person name="Urbanus J.H.M."/>
            <person name="Valle G."/>
            <person name="Van Dyck L."/>
            <person name="Verhasselt P."/>
            <person name="Vierendeels F."/>
            <person name="Vissers S."/>
            <person name="Voet M."/>
            <person name="Volckaert G."/>
            <person name="Wach A."/>
            <person name="Wambutt R."/>
            <person name="Wedler H."/>
            <person name="Zollner A."/>
            <person name="Hani J."/>
        </authorList>
    </citation>
    <scope>NUCLEOTIDE SEQUENCE [LARGE SCALE GENOMIC DNA]</scope>
    <source>
        <strain>ATCC 204508 / S288c</strain>
    </source>
</reference>
<reference key="2">
    <citation type="journal article" date="2014" name="G3 (Bethesda)">
        <title>The reference genome sequence of Saccharomyces cerevisiae: Then and now.</title>
        <authorList>
            <person name="Engel S.R."/>
            <person name="Dietrich F.S."/>
            <person name="Fisk D.G."/>
            <person name="Binkley G."/>
            <person name="Balakrishnan R."/>
            <person name="Costanzo M.C."/>
            <person name="Dwight S.S."/>
            <person name="Hitz B.C."/>
            <person name="Karra K."/>
            <person name="Nash R.S."/>
            <person name="Weng S."/>
            <person name="Wong E.D."/>
            <person name="Lloyd P."/>
            <person name="Skrzypek M.S."/>
            <person name="Miyasato S.R."/>
            <person name="Simison M."/>
            <person name="Cherry J.M."/>
        </authorList>
    </citation>
    <scope>GENOME REANNOTATION</scope>
    <scope>SEQUENCE REVISION TO 310</scope>
    <source>
        <strain>ATCC 204508 / S288c</strain>
    </source>
</reference>
<reference key="3">
    <citation type="journal article" date="1998" name="Genetics">
        <title>Identification of high-copy disruptors of telomeric silencing in Saccharomyces cerevisiae.</title>
        <authorList>
            <person name="Singer M.S."/>
            <person name="Kahana A."/>
            <person name="Wolf A.J."/>
            <person name="Meisinger L.L."/>
            <person name="Peterson S.E."/>
            <person name="Goggin C."/>
            <person name="Mahowald M."/>
            <person name="Gottschling D.E."/>
        </authorList>
    </citation>
    <scope>FUNCTION</scope>
</reference>
<reference key="4">
    <citation type="journal article" date="1999" name="Mol. Cell. Biol.">
        <title>DOT4 links silencing and cell growth in Saccharomyces cerevisiae.</title>
        <authorList>
            <person name="Kahana A."/>
            <person name="Gottschling D.E."/>
        </authorList>
    </citation>
    <scope>FUNCTION</scope>
    <scope>SUBCELLULAR LOCATION</scope>
    <scope>DISRUPTION PHENOTYPE</scope>
    <scope>INTERACTION WITH SIR4</scope>
    <scope>MUTAGENESIS OF CYS-371</scope>
    <scope>CATALYTIC ACTIVITY</scope>
</reference>
<reference key="5">
    <citation type="journal article" date="2001" name="Biochem. Biophys. Res. Commun.">
        <title>The deubiquitinating enzyme Dot4p is involved in regulating nutrient uptake.</title>
        <authorList>
            <person name="Kahana A."/>
        </authorList>
    </citation>
    <scope>FUNCTION</scope>
    <scope>DISRUPTION PHENOTYPE</scope>
</reference>
<reference key="6">
    <citation type="journal article" date="2004" name="J. Biol. Chem.">
        <title>Transcriptional profiling of ubp10 null mutant reveals altered subtelomeric gene expression and insurgence of oxidative stress response.</title>
        <authorList>
            <person name="Orlandi I."/>
            <person name="Bettiga M."/>
            <person name="Alberghina L."/>
            <person name="Vai M."/>
        </authorList>
    </citation>
    <scope>FUNCTION</scope>
    <scope>DISRUPTION PHENOTYPE</scope>
</reference>
<reference key="7">
    <citation type="journal article" date="2005" name="Mol. Cell">
        <title>Maintenance of low histone ubiquitylation by Ubp10 correlates with telomere-proximal Sir2 association and gene silencing.</title>
        <authorList>
            <person name="Emre N.C."/>
            <person name="Ingvarsdottir K."/>
            <person name="Wyce A."/>
            <person name="Wood A."/>
            <person name="Krogan N.J."/>
            <person name="Henry K.W."/>
            <person name="Li K."/>
            <person name="Marmorstein R."/>
            <person name="Greenblatt J.F."/>
            <person name="Shilatifard A."/>
            <person name="Berger S.L."/>
        </authorList>
    </citation>
    <scope>FUNCTION</scope>
    <scope>SUBCELLULAR LOCATION</scope>
</reference>
<reference key="8">
    <citation type="journal article" date="2005" name="Mol. Cell. Biol.">
        <title>Ubp10/Dot4p regulates the persistence of ubiquitinated histone H2B: distinct roles in telomeric silencing and general chromatin.</title>
        <authorList>
            <person name="Gardner R.G."/>
            <person name="Nelson Z.W."/>
            <person name="Gottschling D.E."/>
        </authorList>
    </citation>
    <scope>FUNCTION</scope>
    <scope>SUBCELLULAR LOCATION</scope>
</reference>
<reference key="9">
    <citation type="journal article" date="2006" name="Genetics">
        <title>The histone deubiquitinating enzyme Ubp10 is involved in rDNA locus control in Saccharomyces cerevisiae by affecting Sir2p association.</title>
        <authorList>
            <person name="Calzari L."/>
            <person name="Orlandi I."/>
            <person name="Alberghina L."/>
            <person name="Vai M."/>
        </authorList>
    </citation>
    <scope>FUNCTION</scope>
    <scope>DISRUPTION PHENOTYPE</scope>
</reference>
<reference key="10">
    <citation type="journal article" date="2009" name="Science">
        <title>Global analysis of Cdk1 substrate phosphorylation sites provides insights into evolution.</title>
        <authorList>
            <person name="Holt L.J."/>
            <person name="Tuch B.B."/>
            <person name="Villen J."/>
            <person name="Johnson A.D."/>
            <person name="Gygi S.P."/>
            <person name="Morgan D.O."/>
        </authorList>
    </citation>
    <scope>IDENTIFICATION BY MASS SPECTROMETRY [LARGE SCALE ANALYSIS]</scope>
</reference>
<reference key="11">
    <citation type="journal article" date="2011" name="Genes Dev.">
        <title>Splitting the task: Ubp8 and Ubp10 deubiquitinate different cellular pools of H2BK123.</title>
        <authorList>
            <person name="Schulze J.M."/>
            <person name="Hentrich T."/>
            <person name="Nakanishi S."/>
            <person name="Gupta A."/>
            <person name="Emberly E."/>
            <person name="Shilatifard A."/>
            <person name="Kobor M.S."/>
        </authorList>
    </citation>
    <scope>FUNCTION</scope>
</reference>
<reference key="12">
    <citation type="journal article" date="2012" name="PLoS Genet.">
        <title>Reversal of PCNA ubiquitylation by Ubp10 in Saccharomyces cerevisiae.</title>
        <authorList>
            <person name="Gallego-Sanchez A."/>
            <person name="Andres S."/>
            <person name="Conde F."/>
            <person name="San-Segundo P.A."/>
            <person name="Bueno A."/>
        </authorList>
    </citation>
    <scope>FUNCTION</scope>
    <scope>DISRUPTION PHENOTYPE</scope>
    <scope>INTERACTION WITH PCNA/POL30</scope>
</reference>
<reference key="13">
    <citation type="journal article" date="2012" name="Cell Rep.">
        <title>A conserved deubiquitinating enzyme controls cell growth by regulating RNA polymerase I stability.</title>
        <authorList>
            <person name="Richardson L.A."/>
            <person name="Reed B.J."/>
            <person name="Charette J.M."/>
            <person name="Freed E.F."/>
            <person name="Fredrickson E.K."/>
            <person name="Locke M.N."/>
            <person name="Baserga S.J."/>
            <person name="Gardner R.G."/>
        </authorList>
    </citation>
    <scope>FUNCTION</scope>
    <scope>DISRUPTION PHENOTYPE</scope>
    <scope>SUBCELLULAR LOCATION</scope>
    <scope>INTERACTION WITH DHR2 AND UTP22</scope>
</reference>
<reference key="14">
    <citation type="journal article" date="2015" name="J. Biol. Chem.">
        <title>A conserved deubiquitinating enzyme uses intrinsically disordered regions to scaffold multiple protein interaction sites.</title>
        <authorList>
            <person name="Reed B.J."/>
            <person name="Locke M.N."/>
            <person name="Gardner R.G."/>
        </authorList>
    </citation>
    <scope>DOMAIN</scope>
    <scope>INTERACTION WITH DHR2; SIR4 AND UTP22</scope>
</reference>
<feature type="chain" id="PRO_0000080595" description="Ubiquitin carboxyl-terminal hydrolase 10">
    <location>
        <begin position="1"/>
        <end position="792"/>
    </location>
</feature>
<feature type="domain" description="USP" evidence="1">
    <location>
        <begin position="362"/>
        <end position="733"/>
    </location>
</feature>
<feature type="region of interest" description="DHR2-binding module" evidence="12">
    <location>
        <begin position="2"/>
        <end position="27"/>
    </location>
</feature>
<feature type="region of interest" description="Disordered" evidence="2">
    <location>
        <begin position="64"/>
        <end position="87"/>
    </location>
</feature>
<feature type="region of interest" description="Disordered" evidence="2">
    <location>
        <begin position="103"/>
        <end position="320"/>
    </location>
</feature>
<feature type="region of interest" description="SIR4-binding module" evidence="12">
    <location>
        <begin position="109"/>
        <end position="145"/>
    </location>
</feature>
<feature type="region of interest" description="UTP22-binding module" evidence="12">
    <location>
        <begin position="167"/>
        <end position="208"/>
    </location>
</feature>
<feature type="region of interest" description="Disordered" evidence="2">
    <location>
        <begin position="526"/>
        <end position="563"/>
    </location>
</feature>
<feature type="region of interest" description="Disordered" evidence="2">
    <location>
        <begin position="749"/>
        <end position="792"/>
    </location>
</feature>
<feature type="compositionally biased region" description="Low complexity" evidence="2">
    <location>
        <begin position="107"/>
        <end position="129"/>
    </location>
</feature>
<feature type="compositionally biased region" description="Basic and acidic residues" evidence="2">
    <location>
        <begin position="144"/>
        <end position="171"/>
    </location>
</feature>
<feature type="compositionally biased region" description="Acidic residues" evidence="2">
    <location>
        <begin position="172"/>
        <end position="195"/>
    </location>
</feature>
<feature type="compositionally biased region" description="Basic and acidic residues" evidence="2">
    <location>
        <begin position="211"/>
        <end position="220"/>
    </location>
</feature>
<feature type="compositionally biased region" description="Acidic residues" evidence="2">
    <location>
        <begin position="226"/>
        <end position="241"/>
    </location>
</feature>
<feature type="compositionally biased region" description="Polar residues" evidence="2">
    <location>
        <begin position="288"/>
        <end position="297"/>
    </location>
</feature>
<feature type="compositionally biased region" description="Polar residues" evidence="2">
    <location>
        <begin position="530"/>
        <end position="539"/>
    </location>
</feature>
<feature type="compositionally biased region" description="Low complexity" evidence="2">
    <location>
        <begin position="540"/>
        <end position="563"/>
    </location>
</feature>
<feature type="compositionally biased region" description="Polar residues" evidence="2">
    <location>
        <begin position="749"/>
        <end position="766"/>
    </location>
</feature>
<feature type="compositionally biased region" description="Basic residues" evidence="2">
    <location>
        <begin position="773"/>
        <end position="792"/>
    </location>
</feature>
<feature type="active site" description="Nucleophile" evidence="1">
    <location>
        <position position="371"/>
    </location>
</feature>
<feature type="active site" description="Proton acceptor" evidence="1">
    <location>
        <position position="691"/>
    </location>
</feature>
<feature type="mutagenesis site" description="Abolishes deubiquitinating activity." evidence="3">
    <original>C</original>
    <variation>A</variation>
    <variation>S</variation>
    <location>
        <position position="371"/>
    </location>
</feature>
<feature type="sequence conflict" description="In Ref. 1; CAA96080." evidence="15" ref="1">
    <original>E</original>
    <variation>D</variation>
    <location>
        <position position="310"/>
    </location>
</feature>
<protein>
    <recommendedName>
        <fullName>Ubiquitin carboxyl-terminal hydrolase 10</fullName>
        <ecNumber evidence="3">3.4.19.12</ecNumber>
    </recommendedName>
    <alternativeName>
        <fullName>Deubiquitinating enzyme 10</fullName>
    </alternativeName>
    <alternativeName>
        <fullName evidence="14">Disrupter of telomere silencing protein 4</fullName>
    </alternativeName>
    <alternativeName>
        <fullName>Ubiquitin thioesterase 10</fullName>
    </alternativeName>
    <alternativeName>
        <fullName>Ubiquitin-specific-processing protease 10</fullName>
    </alternativeName>
</protein>
<organism>
    <name type="scientific">Saccharomyces cerevisiae (strain ATCC 204508 / S288c)</name>
    <name type="common">Baker's yeast</name>
    <dbReference type="NCBI Taxonomy" id="559292"/>
    <lineage>
        <taxon>Eukaryota</taxon>
        <taxon>Fungi</taxon>
        <taxon>Dikarya</taxon>
        <taxon>Ascomycota</taxon>
        <taxon>Saccharomycotina</taxon>
        <taxon>Saccharomycetes</taxon>
        <taxon>Saccharomycetales</taxon>
        <taxon>Saccharomycetaceae</taxon>
        <taxon>Saccharomyces</taxon>
    </lineage>
</organism>